<comment type="similarity">
    <text evidence="1">Belongs to the bacterial ribosomal protein bS16 family.</text>
</comment>
<dbReference type="EMBL" id="CP000480">
    <property type="protein sequence ID" value="ABK69801.1"/>
    <property type="molecule type" value="Genomic_DNA"/>
</dbReference>
<dbReference type="EMBL" id="CP001663">
    <property type="protein sequence ID" value="AFP38842.1"/>
    <property type="molecule type" value="Genomic_DNA"/>
</dbReference>
<dbReference type="RefSeq" id="WP_011728340.1">
    <property type="nucleotide sequence ID" value="NZ_SIJM01000012.1"/>
</dbReference>
<dbReference type="RefSeq" id="YP_886775.1">
    <property type="nucleotide sequence ID" value="NC_008596.1"/>
</dbReference>
<dbReference type="PDB" id="5O5J">
    <property type="method" value="EM"/>
    <property type="resolution" value="3.45 A"/>
    <property type="chains" value="P=1-156"/>
</dbReference>
<dbReference type="PDB" id="5O61">
    <property type="method" value="EM"/>
    <property type="resolution" value="3.31 A"/>
    <property type="chains" value="BP=1-156"/>
</dbReference>
<dbReference type="PDB" id="5XYU">
    <property type="method" value="EM"/>
    <property type="resolution" value="3.45 A"/>
    <property type="chains" value="P=1-156"/>
</dbReference>
<dbReference type="PDB" id="5ZEB">
    <property type="method" value="EM"/>
    <property type="resolution" value="3.40 A"/>
    <property type="chains" value="p=1-156"/>
</dbReference>
<dbReference type="PDB" id="5ZEP">
    <property type="method" value="EM"/>
    <property type="resolution" value="3.40 A"/>
    <property type="chains" value="p=1-156"/>
</dbReference>
<dbReference type="PDB" id="5ZEU">
    <property type="method" value="EM"/>
    <property type="resolution" value="3.70 A"/>
    <property type="chains" value="p=1-156"/>
</dbReference>
<dbReference type="PDB" id="6DZI">
    <property type="method" value="EM"/>
    <property type="resolution" value="3.46 A"/>
    <property type="chains" value="z=2-114"/>
</dbReference>
<dbReference type="PDB" id="6DZK">
    <property type="method" value="EM"/>
    <property type="resolution" value="3.60 A"/>
    <property type="chains" value="P=1-156"/>
</dbReference>
<dbReference type="PDB" id="8FR8">
    <property type="method" value="EM"/>
    <property type="resolution" value="2.76 A"/>
    <property type="chains" value="q=2-114"/>
</dbReference>
<dbReference type="PDB" id="8V9J">
    <property type="method" value="EM"/>
    <property type="resolution" value="3.10 A"/>
    <property type="chains" value="p=1-156"/>
</dbReference>
<dbReference type="PDB" id="8V9K">
    <property type="method" value="EM"/>
    <property type="resolution" value="3.10 A"/>
    <property type="chains" value="p=1-156"/>
</dbReference>
<dbReference type="PDB" id="8V9L">
    <property type="method" value="EM"/>
    <property type="resolution" value="3.00 A"/>
    <property type="chains" value="p=1-156"/>
</dbReference>
<dbReference type="PDB" id="8VIO">
    <property type="method" value="EM"/>
    <property type="resolution" value="3.26 A"/>
    <property type="chains" value="w=1-156"/>
</dbReference>
<dbReference type="PDB" id="8WHX">
    <property type="method" value="EM"/>
    <property type="resolution" value="2.80 A"/>
    <property type="chains" value="q=1-156"/>
</dbReference>
<dbReference type="PDB" id="8WI7">
    <property type="method" value="EM"/>
    <property type="resolution" value="3.50 A"/>
    <property type="chains" value="q=1-156"/>
</dbReference>
<dbReference type="PDB" id="8WI9">
    <property type="method" value="EM"/>
    <property type="resolution" value="3.50 A"/>
    <property type="chains" value="q=1-156"/>
</dbReference>
<dbReference type="PDB" id="8WIB">
    <property type="method" value="EM"/>
    <property type="resolution" value="3.50 A"/>
    <property type="chains" value="q=1-156"/>
</dbReference>
<dbReference type="PDB" id="8WID">
    <property type="method" value="EM"/>
    <property type="resolution" value="3.50 A"/>
    <property type="chains" value="q=1-156"/>
</dbReference>
<dbReference type="PDB" id="8WIF">
    <property type="method" value="EM"/>
    <property type="resolution" value="2.90 A"/>
    <property type="chains" value="q=1-156"/>
</dbReference>
<dbReference type="PDBsum" id="5O5J"/>
<dbReference type="PDBsum" id="5O61"/>
<dbReference type="PDBsum" id="5XYU"/>
<dbReference type="PDBsum" id="5ZEB"/>
<dbReference type="PDBsum" id="5ZEP"/>
<dbReference type="PDBsum" id="5ZEU"/>
<dbReference type="PDBsum" id="6DZI"/>
<dbReference type="PDBsum" id="6DZK"/>
<dbReference type="PDBsum" id="8FR8"/>
<dbReference type="PDBsum" id="8V9J"/>
<dbReference type="PDBsum" id="8V9K"/>
<dbReference type="PDBsum" id="8V9L"/>
<dbReference type="PDBsum" id="8VIO"/>
<dbReference type="PDBsum" id="8WHX"/>
<dbReference type="PDBsum" id="8WI7"/>
<dbReference type="PDBsum" id="8WI9"/>
<dbReference type="PDBsum" id="8WIB"/>
<dbReference type="PDBsum" id="8WID"/>
<dbReference type="PDBsum" id="8WIF"/>
<dbReference type="EMDB" id="EMD-29397"/>
<dbReference type="EMDB" id="EMD-3748"/>
<dbReference type="EMDB" id="EMD-3751"/>
<dbReference type="EMDB" id="EMD-37551"/>
<dbReference type="EMDB" id="EMD-37559"/>
<dbReference type="EMDB" id="EMD-37561"/>
<dbReference type="EMDB" id="EMD-37562"/>
<dbReference type="EMDB" id="EMD-37564"/>
<dbReference type="EMDB" id="EMD-37565"/>
<dbReference type="EMDB" id="EMD-43074"/>
<dbReference type="EMDB" id="EMD-43075"/>
<dbReference type="EMDB" id="EMD-43076"/>
<dbReference type="EMDB" id="EMD-43267"/>
<dbReference type="EMDB" id="EMD-6790"/>
<dbReference type="EMDB" id="EMD-6920"/>
<dbReference type="EMDB" id="EMD-6921"/>
<dbReference type="EMDB" id="EMD-6923"/>
<dbReference type="EMDB" id="EMD-8932"/>
<dbReference type="EMDB" id="EMD-8934"/>
<dbReference type="SMR" id="A0QV37"/>
<dbReference type="IntAct" id="A0QV37">
    <property type="interactions" value="1"/>
</dbReference>
<dbReference type="STRING" id="246196.MSMEG_2435"/>
<dbReference type="PaxDb" id="246196-MSMEI_2374"/>
<dbReference type="GeneID" id="93457226"/>
<dbReference type="KEGG" id="msb:LJ00_12110"/>
<dbReference type="KEGG" id="msg:MSMEI_2374"/>
<dbReference type="KEGG" id="msm:MSMEG_2435"/>
<dbReference type="PATRIC" id="fig|246196.19.peg.2400"/>
<dbReference type="eggNOG" id="COG0228">
    <property type="taxonomic scope" value="Bacteria"/>
</dbReference>
<dbReference type="OrthoDB" id="9807878at2"/>
<dbReference type="Proteomes" id="UP000000757">
    <property type="component" value="Chromosome"/>
</dbReference>
<dbReference type="Proteomes" id="UP000006158">
    <property type="component" value="Chromosome"/>
</dbReference>
<dbReference type="GO" id="GO:0005737">
    <property type="term" value="C:cytoplasm"/>
    <property type="evidence" value="ECO:0007669"/>
    <property type="project" value="UniProtKB-ARBA"/>
</dbReference>
<dbReference type="GO" id="GO:0015935">
    <property type="term" value="C:small ribosomal subunit"/>
    <property type="evidence" value="ECO:0007669"/>
    <property type="project" value="TreeGrafter"/>
</dbReference>
<dbReference type="GO" id="GO:0003735">
    <property type="term" value="F:structural constituent of ribosome"/>
    <property type="evidence" value="ECO:0007669"/>
    <property type="project" value="InterPro"/>
</dbReference>
<dbReference type="GO" id="GO:0006412">
    <property type="term" value="P:translation"/>
    <property type="evidence" value="ECO:0007669"/>
    <property type="project" value="UniProtKB-UniRule"/>
</dbReference>
<dbReference type="Gene3D" id="3.30.1320.10">
    <property type="match status" value="1"/>
</dbReference>
<dbReference type="HAMAP" id="MF_00385">
    <property type="entry name" value="Ribosomal_bS16"/>
    <property type="match status" value="1"/>
</dbReference>
<dbReference type="InterPro" id="IPR000307">
    <property type="entry name" value="Ribosomal_bS16"/>
</dbReference>
<dbReference type="InterPro" id="IPR020592">
    <property type="entry name" value="Ribosomal_bS16_CS"/>
</dbReference>
<dbReference type="InterPro" id="IPR023803">
    <property type="entry name" value="Ribosomal_bS16_dom_sf"/>
</dbReference>
<dbReference type="NCBIfam" id="NF011093">
    <property type="entry name" value="PRK14520.1"/>
    <property type="match status" value="1"/>
</dbReference>
<dbReference type="NCBIfam" id="TIGR00002">
    <property type="entry name" value="S16"/>
    <property type="match status" value="1"/>
</dbReference>
<dbReference type="PANTHER" id="PTHR12919">
    <property type="entry name" value="30S RIBOSOMAL PROTEIN S16"/>
    <property type="match status" value="1"/>
</dbReference>
<dbReference type="PANTHER" id="PTHR12919:SF20">
    <property type="entry name" value="SMALL RIBOSOMAL SUBUNIT PROTEIN BS16M"/>
    <property type="match status" value="1"/>
</dbReference>
<dbReference type="Pfam" id="PF00886">
    <property type="entry name" value="Ribosomal_S16"/>
    <property type="match status" value="1"/>
</dbReference>
<dbReference type="SUPFAM" id="SSF54565">
    <property type="entry name" value="Ribosomal protein S16"/>
    <property type="match status" value="1"/>
</dbReference>
<dbReference type="PROSITE" id="PS00732">
    <property type="entry name" value="RIBOSOMAL_S16"/>
    <property type="match status" value="1"/>
</dbReference>
<organism>
    <name type="scientific">Mycolicibacterium smegmatis (strain ATCC 700084 / mc(2)155)</name>
    <name type="common">Mycobacterium smegmatis</name>
    <dbReference type="NCBI Taxonomy" id="246196"/>
    <lineage>
        <taxon>Bacteria</taxon>
        <taxon>Bacillati</taxon>
        <taxon>Actinomycetota</taxon>
        <taxon>Actinomycetes</taxon>
        <taxon>Mycobacteriales</taxon>
        <taxon>Mycobacteriaceae</taxon>
        <taxon>Mycolicibacterium</taxon>
    </lineage>
</organism>
<reference key="1">
    <citation type="submission" date="2006-10" db="EMBL/GenBank/DDBJ databases">
        <authorList>
            <person name="Fleischmann R.D."/>
            <person name="Dodson R.J."/>
            <person name="Haft D.H."/>
            <person name="Merkel J.S."/>
            <person name="Nelson W.C."/>
            <person name="Fraser C.M."/>
        </authorList>
    </citation>
    <scope>NUCLEOTIDE SEQUENCE [LARGE SCALE GENOMIC DNA]</scope>
    <source>
        <strain>ATCC 700084 / mc(2)155</strain>
    </source>
</reference>
<reference key="2">
    <citation type="journal article" date="2007" name="Genome Biol.">
        <title>Interrupted coding sequences in Mycobacterium smegmatis: authentic mutations or sequencing errors?</title>
        <authorList>
            <person name="Deshayes C."/>
            <person name="Perrodou E."/>
            <person name="Gallien S."/>
            <person name="Euphrasie D."/>
            <person name="Schaeffer C."/>
            <person name="Van-Dorsselaer A."/>
            <person name="Poch O."/>
            <person name="Lecompte O."/>
            <person name="Reyrat J.-M."/>
        </authorList>
    </citation>
    <scope>NUCLEOTIDE SEQUENCE [LARGE SCALE GENOMIC DNA]</scope>
    <source>
        <strain>ATCC 700084 / mc(2)155</strain>
    </source>
</reference>
<reference key="3">
    <citation type="journal article" date="2009" name="Genome Res.">
        <title>Ortho-proteogenomics: multiple proteomes investigation through orthology and a new MS-based protocol.</title>
        <authorList>
            <person name="Gallien S."/>
            <person name="Perrodou E."/>
            <person name="Carapito C."/>
            <person name="Deshayes C."/>
            <person name="Reyrat J.-M."/>
            <person name="Van Dorsselaer A."/>
            <person name="Poch O."/>
            <person name="Schaeffer C."/>
            <person name="Lecompte O."/>
        </authorList>
    </citation>
    <scope>NUCLEOTIDE SEQUENCE [LARGE SCALE GENOMIC DNA]</scope>
    <scope>IDENTIFICATION BY MASS SPECTROMETRY [LARGE SCALE ANALYSIS]</scope>
    <source>
        <strain>ATCC 700084 / mc(2)155</strain>
    </source>
</reference>
<gene>
    <name evidence="1" type="primary">rpsP</name>
    <name type="ordered locus">MSMEG_2435</name>
    <name type="ordered locus">MSMEI_2374</name>
</gene>
<feature type="chain" id="PRO_1000049293" description="Small ribosomal subunit protein bS16">
    <location>
        <begin position="1"/>
        <end position="156"/>
    </location>
</feature>
<feature type="region of interest" description="Disordered" evidence="2">
    <location>
        <begin position="113"/>
        <end position="156"/>
    </location>
</feature>
<feature type="compositionally biased region" description="Low complexity" evidence="2">
    <location>
        <begin position="113"/>
        <end position="123"/>
    </location>
</feature>
<feature type="compositionally biased region" description="Low complexity" evidence="2">
    <location>
        <begin position="137"/>
        <end position="156"/>
    </location>
</feature>
<feature type="strand" evidence="5">
    <location>
        <begin position="3"/>
        <end position="9"/>
    </location>
</feature>
<feature type="strand" evidence="5">
    <location>
        <begin position="18"/>
        <end position="27"/>
    </location>
</feature>
<feature type="strand" evidence="5">
    <location>
        <begin position="34"/>
        <end position="36"/>
    </location>
</feature>
<feature type="strand" evidence="5">
    <location>
        <begin position="44"/>
        <end position="46"/>
    </location>
</feature>
<feature type="strand" evidence="4">
    <location>
        <begin position="49"/>
        <end position="51"/>
    </location>
</feature>
<feature type="helix" evidence="5">
    <location>
        <begin position="53"/>
        <end position="62"/>
    </location>
</feature>
<feature type="helix" evidence="5">
    <location>
        <begin position="68"/>
        <end position="77"/>
    </location>
</feature>
<feature type="helix" evidence="5">
    <location>
        <begin position="79"/>
        <end position="84"/>
    </location>
</feature>
<feature type="helix" evidence="4">
    <location>
        <begin position="102"/>
        <end position="113"/>
    </location>
</feature>
<evidence type="ECO:0000255" key="1">
    <source>
        <dbReference type="HAMAP-Rule" id="MF_00385"/>
    </source>
</evidence>
<evidence type="ECO:0000256" key="2">
    <source>
        <dbReference type="SAM" id="MobiDB-lite"/>
    </source>
</evidence>
<evidence type="ECO:0000305" key="3"/>
<evidence type="ECO:0007829" key="4">
    <source>
        <dbReference type="PDB" id="5O5J"/>
    </source>
</evidence>
<evidence type="ECO:0007829" key="5">
    <source>
        <dbReference type="PDB" id="5XYU"/>
    </source>
</evidence>
<name>RS16_MYCS2</name>
<protein>
    <recommendedName>
        <fullName evidence="1">Small ribosomal subunit protein bS16</fullName>
    </recommendedName>
    <alternativeName>
        <fullName evidence="3">30S ribosomal protein S16</fullName>
    </alternativeName>
</protein>
<sequence>MAVKIKLTRLGKIRNPQYRIIVADARTRRDGRAIEVIGRYHPKEEPSLIQIDSERAQYWLGVGAQPTEPVLALLKITGDWQKFKGLPGAEGTLKVKEPKPSKLDLFNAALAEAESGTTAAATTPKKKKAPKKDEAAEAPAEAAEAPAEAADAASES</sequence>
<keyword id="KW-0002">3D-structure</keyword>
<keyword id="KW-1185">Reference proteome</keyword>
<keyword id="KW-0687">Ribonucleoprotein</keyword>
<keyword id="KW-0689">Ribosomal protein</keyword>
<proteinExistence type="evidence at protein level"/>
<accession>A0QV37</accession>
<accession>I7G006</accession>